<reference key="1">
    <citation type="submission" date="2007-07" db="EMBL/GenBank/DDBJ databases">
        <title>Complete sequence of chromosome of Shewanella baltica OS185.</title>
        <authorList>
            <consortium name="US DOE Joint Genome Institute"/>
            <person name="Copeland A."/>
            <person name="Lucas S."/>
            <person name="Lapidus A."/>
            <person name="Barry K."/>
            <person name="Glavina del Rio T."/>
            <person name="Dalin E."/>
            <person name="Tice H."/>
            <person name="Pitluck S."/>
            <person name="Sims D."/>
            <person name="Brettin T."/>
            <person name="Bruce D."/>
            <person name="Detter J.C."/>
            <person name="Han C."/>
            <person name="Schmutz J."/>
            <person name="Larimer F."/>
            <person name="Land M."/>
            <person name="Hauser L."/>
            <person name="Kyrpides N."/>
            <person name="Mikhailova N."/>
            <person name="Brettar I."/>
            <person name="Rodrigues J."/>
            <person name="Konstantinidis K."/>
            <person name="Tiedje J."/>
            <person name="Richardson P."/>
        </authorList>
    </citation>
    <scope>NUCLEOTIDE SEQUENCE [LARGE SCALE GENOMIC DNA]</scope>
    <source>
        <strain>OS185</strain>
    </source>
</reference>
<keyword id="KW-0479">Metal-binding</keyword>
<keyword id="KW-0862">Zinc</keyword>
<proteinExistence type="inferred from homology"/>
<gene>
    <name evidence="1" type="primary">yacG</name>
    <name type="ordered locus">Shew185_3947</name>
</gene>
<organism>
    <name type="scientific">Shewanella baltica (strain OS185)</name>
    <dbReference type="NCBI Taxonomy" id="402882"/>
    <lineage>
        <taxon>Bacteria</taxon>
        <taxon>Pseudomonadati</taxon>
        <taxon>Pseudomonadota</taxon>
        <taxon>Gammaproteobacteria</taxon>
        <taxon>Alteromonadales</taxon>
        <taxon>Shewanellaceae</taxon>
        <taxon>Shewanella</taxon>
    </lineage>
</organism>
<sequence>MPLTVNCPICKAPVEWVPQSAFKPFCSERCKLIDLGDWASEKHVIPVKAEFDPEAFDEFDLDEGDFFKE</sequence>
<feature type="chain" id="PRO_1000056990" description="DNA gyrase inhibitor YacG">
    <location>
        <begin position="1"/>
        <end position="69"/>
    </location>
</feature>
<feature type="binding site" evidence="1">
    <location>
        <position position="7"/>
    </location>
    <ligand>
        <name>Zn(2+)</name>
        <dbReference type="ChEBI" id="CHEBI:29105"/>
    </ligand>
</feature>
<feature type="binding site" evidence="1">
    <location>
        <position position="10"/>
    </location>
    <ligand>
        <name>Zn(2+)</name>
        <dbReference type="ChEBI" id="CHEBI:29105"/>
    </ligand>
</feature>
<feature type="binding site" evidence="1">
    <location>
        <position position="26"/>
    </location>
    <ligand>
        <name>Zn(2+)</name>
        <dbReference type="ChEBI" id="CHEBI:29105"/>
    </ligand>
</feature>
<feature type="binding site" evidence="1">
    <location>
        <position position="30"/>
    </location>
    <ligand>
        <name>Zn(2+)</name>
        <dbReference type="ChEBI" id="CHEBI:29105"/>
    </ligand>
</feature>
<accession>A6WTC9</accession>
<comment type="function">
    <text evidence="1">Inhibits all the catalytic activities of DNA gyrase by preventing its interaction with DNA. Acts by binding directly to the C-terminal domain of GyrB, which probably disrupts DNA binding by the gyrase.</text>
</comment>
<comment type="cofactor">
    <cofactor evidence="1">
        <name>Zn(2+)</name>
        <dbReference type="ChEBI" id="CHEBI:29105"/>
    </cofactor>
    <text evidence="1">Binds 1 zinc ion.</text>
</comment>
<comment type="subunit">
    <text evidence="1">Interacts with GyrB.</text>
</comment>
<comment type="similarity">
    <text evidence="1">Belongs to the DNA gyrase inhibitor YacG family.</text>
</comment>
<dbReference type="EMBL" id="CP000753">
    <property type="protein sequence ID" value="ABS10068.1"/>
    <property type="molecule type" value="Genomic_DNA"/>
</dbReference>
<dbReference type="RefSeq" id="WP_006083355.1">
    <property type="nucleotide sequence ID" value="NC_009665.1"/>
</dbReference>
<dbReference type="SMR" id="A6WTC9"/>
<dbReference type="GeneID" id="11774061"/>
<dbReference type="KEGG" id="sbm:Shew185_3947"/>
<dbReference type="HOGENOM" id="CLU_178280_3_2_6"/>
<dbReference type="GO" id="GO:0008657">
    <property type="term" value="F:DNA topoisomerase type II (double strand cut, ATP-hydrolyzing) inhibitor activity"/>
    <property type="evidence" value="ECO:0007669"/>
    <property type="project" value="UniProtKB-UniRule"/>
</dbReference>
<dbReference type="GO" id="GO:0008270">
    <property type="term" value="F:zinc ion binding"/>
    <property type="evidence" value="ECO:0007669"/>
    <property type="project" value="UniProtKB-UniRule"/>
</dbReference>
<dbReference type="GO" id="GO:0006355">
    <property type="term" value="P:regulation of DNA-templated transcription"/>
    <property type="evidence" value="ECO:0007669"/>
    <property type="project" value="InterPro"/>
</dbReference>
<dbReference type="Gene3D" id="3.30.50.10">
    <property type="entry name" value="Erythroid Transcription Factor GATA-1, subunit A"/>
    <property type="match status" value="1"/>
</dbReference>
<dbReference type="HAMAP" id="MF_00649">
    <property type="entry name" value="DNA_gyrase_inhibitor_YacG"/>
    <property type="match status" value="1"/>
</dbReference>
<dbReference type="InterPro" id="IPR005584">
    <property type="entry name" value="DNA_gyrase_inhibitor_YacG"/>
</dbReference>
<dbReference type="InterPro" id="IPR013088">
    <property type="entry name" value="Znf_NHR/GATA"/>
</dbReference>
<dbReference type="NCBIfam" id="NF001638">
    <property type="entry name" value="PRK00418.1"/>
    <property type="match status" value="1"/>
</dbReference>
<dbReference type="PANTHER" id="PTHR36150">
    <property type="entry name" value="DNA GYRASE INHIBITOR YACG"/>
    <property type="match status" value="1"/>
</dbReference>
<dbReference type="PANTHER" id="PTHR36150:SF1">
    <property type="entry name" value="DNA GYRASE INHIBITOR YACG"/>
    <property type="match status" value="1"/>
</dbReference>
<dbReference type="Pfam" id="PF03884">
    <property type="entry name" value="YacG"/>
    <property type="match status" value="1"/>
</dbReference>
<dbReference type="SUPFAM" id="SSF57716">
    <property type="entry name" value="Glucocorticoid receptor-like (DNA-binding domain)"/>
    <property type="match status" value="1"/>
</dbReference>
<evidence type="ECO:0000255" key="1">
    <source>
        <dbReference type="HAMAP-Rule" id="MF_00649"/>
    </source>
</evidence>
<name>YACG_SHEB8</name>
<protein>
    <recommendedName>
        <fullName evidence="1">DNA gyrase inhibitor YacG</fullName>
    </recommendedName>
</protein>